<reference key="1">
    <citation type="submission" date="2007-10" db="EMBL/GenBank/DDBJ databases">
        <title>Complete sequence of chromosome 1 of Burkholderia multivorans ATCC 17616.</title>
        <authorList>
            <person name="Copeland A."/>
            <person name="Lucas S."/>
            <person name="Lapidus A."/>
            <person name="Barry K."/>
            <person name="Glavina del Rio T."/>
            <person name="Dalin E."/>
            <person name="Tice H."/>
            <person name="Pitluck S."/>
            <person name="Chain P."/>
            <person name="Malfatti S."/>
            <person name="Shin M."/>
            <person name="Vergez L."/>
            <person name="Schmutz J."/>
            <person name="Larimer F."/>
            <person name="Land M."/>
            <person name="Hauser L."/>
            <person name="Kyrpides N."/>
            <person name="Kim E."/>
            <person name="Tiedje J."/>
            <person name="Richardson P."/>
        </authorList>
    </citation>
    <scope>NUCLEOTIDE SEQUENCE [LARGE SCALE GENOMIC DNA]</scope>
    <source>
        <strain>ATCC 17616 / 249</strain>
    </source>
</reference>
<reference key="2">
    <citation type="submission" date="2007-04" db="EMBL/GenBank/DDBJ databases">
        <title>Complete genome sequence of Burkholderia multivorans ATCC 17616.</title>
        <authorList>
            <person name="Ohtsubo Y."/>
            <person name="Yamashita A."/>
            <person name="Kurokawa K."/>
            <person name="Takami H."/>
            <person name="Yuhara S."/>
            <person name="Nishiyama E."/>
            <person name="Endo R."/>
            <person name="Miyazaki R."/>
            <person name="Ono A."/>
            <person name="Yano K."/>
            <person name="Ito M."/>
            <person name="Sota M."/>
            <person name="Yuji N."/>
            <person name="Hattori M."/>
            <person name="Tsuda M."/>
        </authorList>
    </citation>
    <scope>NUCLEOTIDE SEQUENCE [LARGE SCALE GENOMIC DNA]</scope>
    <source>
        <strain>ATCC 17616 / 249</strain>
    </source>
</reference>
<name>LFTR_BURM1</name>
<comment type="function">
    <text evidence="1">Functions in the N-end rule pathway of protein degradation where it conjugates Leu, Phe and, less efficiently, Met from aminoacyl-tRNAs to the N-termini of proteins containing an N-terminal arginine or lysine.</text>
</comment>
<comment type="catalytic activity">
    <reaction evidence="1">
        <text>N-terminal L-lysyl-[protein] + L-leucyl-tRNA(Leu) = N-terminal L-leucyl-L-lysyl-[protein] + tRNA(Leu) + H(+)</text>
        <dbReference type="Rhea" id="RHEA:12340"/>
        <dbReference type="Rhea" id="RHEA-COMP:9613"/>
        <dbReference type="Rhea" id="RHEA-COMP:9622"/>
        <dbReference type="Rhea" id="RHEA-COMP:12670"/>
        <dbReference type="Rhea" id="RHEA-COMP:12671"/>
        <dbReference type="ChEBI" id="CHEBI:15378"/>
        <dbReference type="ChEBI" id="CHEBI:65249"/>
        <dbReference type="ChEBI" id="CHEBI:78442"/>
        <dbReference type="ChEBI" id="CHEBI:78494"/>
        <dbReference type="ChEBI" id="CHEBI:133043"/>
        <dbReference type="EC" id="2.3.2.6"/>
    </reaction>
</comment>
<comment type="catalytic activity">
    <reaction evidence="1">
        <text>N-terminal L-arginyl-[protein] + L-leucyl-tRNA(Leu) = N-terminal L-leucyl-L-arginyl-[protein] + tRNA(Leu) + H(+)</text>
        <dbReference type="Rhea" id="RHEA:50416"/>
        <dbReference type="Rhea" id="RHEA-COMP:9613"/>
        <dbReference type="Rhea" id="RHEA-COMP:9622"/>
        <dbReference type="Rhea" id="RHEA-COMP:12672"/>
        <dbReference type="Rhea" id="RHEA-COMP:12673"/>
        <dbReference type="ChEBI" id="CHEBI:15378"/>
        <dbReference type="ChEBI" id="CHEBI:64719"/>
        <dbReference type="ChEBI" id="CHEBI:78442"/>
        <dbReference type="ChEBI" id="CHEBI:78494"/>
        <dbReference type="ChEBI" id="CHEBI:133044"/>
        <dbReference type="EC" id="2.3.2.6"/>
    </reaction>
</comment>
<comment type="catalytic activity">
    <reaction evidence="1">
        <text>L-phenylalanyl-tRNA(Phe) + an N-terminal L-alpha-aminoacyl-[protein] = an N-terminal L-phenylalanyl-L-alpha-aminoacyl-[protein] + tRNA(Phe)</text>
        <dbReference type="Rhea" id="RHEA:43632"/>
        <dbReference type="Rhea" id="RHEA-COMP:9668"/>
        <dbReference type="Rhea" id="RHEA-COMP:9699"/>
        <dbReference type="Rhea" id="RHEA-COMP:10636"/>
        <dbReference type="Rhea" id="RHEA-COMP:10637"/>
        <dbReference type="ChEBI" id="CHEBI:78442"/>
        <dbReference type="ChEBI" id="CHEBI:78531"/>
        <dbReference type="ChEBI" id="CHEBI:78597"/>
        <dbReference type="ChEBI" id="CHEBI:83561"/>
        <dbReference type="EC" id="2.3.2.6"/>
    </reaction>
</comment>
<comment type="subcellular location">
    <subcellularLocation>
        <location evidence="1">Cytoplasm</location>
    </subcellularLocation>
</comment>
<comment type="similarity">
    <text evidence="1">Belongs to the L/F-transferase family.</text>
</comment>
<accession>A9AJ16</accession>
<organism>
    <name type="scientific">Burkholderia multivorans (strain ATCC 17616 / 249)</name>
    <dbReference type="NCBI Taxonomy" id="395019"/>
    <lineage>
        <taxon>Bacteria</taxon>
        <taxon>Pseudomonadati</taxon>
        <taxon>Pseudomonadota</taxon>
        <taxon>Betaproteobacteria</taxon>
        <taxon>Burkholderiales</taxon>
        <taxon>Burkholderiaceae</taxon>
        <taxon>Burkholderia</taxon>
        <taxon>Burkholderia cepacia complex</taxon>
    </lineage>
</organism>
<sequence length="254" mass="28073">MVPWLGPDDPFPPVERALGPATGAPGLLAASADLLPSRLIDAYLRGIFPWYSDGQPVLWWSPDPRMILVPDEFKVSPSLKKTLKRVLRDPAWEVRVDHDFRGVMRACAQAPRRGQRGTWITAEIIDAYSSLYRSGNAHSIETWHDGRRVGGLYGVAFGQMFFGESMYADVTDASKIALAALVAHLREHGLEMIDCQQNTSHLASLGGREIARKAFVAHVRRAVAEPPIPWQFDKRVLAALTGRTEPAAPSGIER</sequence>
<feature type="chain" id="PRO_1000131909" description="Leucyl/phenylalanyl-tRNA--protein transferase">
    <location>
        <begin position="1"/>
        <end position="254"/>
    </location>
</feature>
<dbReference type="EC" id="2.3.2.6" evidence="1"/>
<dbReference type="EMBL" id="CP000868">
    <property type="protein sequence ID" value="ABX15364.1"/>
    <property type="molecule type" value="Genomic_DNA"/>
</dbReference>
<dbReference type="EMBL" id="AP009385">
    <property type="protein sequence ID" value="BAG43493.1"/>
    <property type="molecule type" value="Genomic_DNA"/>
</dbReference>
<dbReference type="RefSeq" id="WP_006414405.1">
    <property type="nucleotide sequence ID" value="NC_010084.1"/>
</dbReference>
<dbReference type="SMR" id="A9AJ16"/>
<dbReference type="STRING" id="395019.BMULJ_01567"/>
<dbReference type="KEGG" id="bmj:BMULJ_01567"/>
<dbReference type="KEGG" id="bmu:Bmul_1676"/>
<dbReference type="eggNOG" id="COG2360">
    <property type="taxonomic scope" value="Bacteria"/>
</dbReference>
<dbReference type="HOGENOM" id="CLU_075045_0_0_4"/>
<dbReference type="Proteomes" id="UP000008815">
    <property type="component" value="Chromosome 1"/>
</dbReference>
<dbReference type="GO" id="GO:0005737">
    <property type="term" value="C:cytoplasm"/>
    <property type="evidence" value="ECO:0007669"/>
    <property type="project" value="UniProtKB-SubCell"/>
</dbReference>
<dbReference type="GO" id="GO:0008914">
    <property type="term" value="F:leucyl-tRNA--protein transferase activity"/>
    <property type="evidence" value="ECO:0007669"/>
    <property type="project" value="UniProtKB-UniRule"/>
</dbReference>
<dbReference type="GO" id="GO:0030163">
    <property type="term" value="P:protein catabolic process"/>
    <property type="evidence" value="ECO:0007669"/>
    <property type="project" value="UniProtKB-UniRule"/>
</dbReference>
<dbReference type="Gene3D" id="3.40.630.70">
    <property type="entry name" value="Leucyl/phenylalanyl-tRNA-protein transferase, C-terminal domain"/>
    <property type="match status" value="1"/>
</dbReference>
<dbReference type="Gene3D" id="3.30.70.3550">
    <property type="entry name" value="Leucyl/phenylalanyl-tRNA-protein transferase, N-terminal domain"/>
    <property type="match status" value="1"/>
</dbReference>
<dbReference type="HAMAP" id="MF_00688">
    <property type="entry name" value="Leu_Phe_trans"/>
    <property type="match status" value="1"/>
</dbReference>
<dbReference type="InterPro" id="IPR016181">
    <property type="entry name" value="Acyl_CoA_acyltransferase"/>
</dbReference>
<dbReference type="InterPro" id="IPR004616">
    <property type="entry name" value="Leu/Phe-tRNA_Trfase"/>
</dbReference>
<dbReference type="InterPro" id="IPR042203">
    <property type="entry name" value="Leu/Phe-tRNA_Trfase_C"/>
</dbReference>
<dbReference type="InterPro" id="IPR042221">
    <property type="entry name" value="Leu/Phe-tRNA_Trfase_N"/>
</dbReference>
<dbReference type="NCBIfam" id="TIGR00667">
    <property type="entry name" value="aat"/>
    <property type="match status" value="1"/>
</dbReference>
<dbReference type="PANTHER" id="PTHR30098">
    <property type="entry name" value="LEUCYL/PHENYLALANYL-TRNA--PROTEIN TRANSFERASE"/>
    <property type="match status" value="1"/>
</dbReference>
<dbReference type="PANTHER" id="PTHR30098:SF2">
    <property type="entry name" value="LEUCYL_PHENYLALANYL-TRNA--PROTEIN TRANSFERASE"/>
    <property type="match status" value="1"/>
</dbReference>
<dbReference type="Pfam" id="PF03588">
    <property type="entry name" value="Leu_Phe_trans"/>
    <property type="match status" value="1"/>
</dbReference>
<dbReference type="SUPFAM" id="SSF55729">
    <property type="entry name" value="Acyl-CoA N-acyltransferases (Nat)"/>
    <property type="match status" value="1"/>
</dbReference>
<evidence type="ECO:0000255" key="1">
    <source>
        <dbReference type="HAMAP-Rule" id="MF_00688"/>
    </source>
</evidence>
<protein>
    <recommendedName>
        <fullName evidence="1">Leucyl/phenylalanyl-tRNA--protein transferase</fullName>
        <ecNumber evidence="1">2.3.2.6</ecNumber>
    </recommendedName>
    <alternativeName>
        <fullName evidence="1">L/F-transferase</fullName>
    </alternativeName>
    <alternativeName>
        <fullName evidence="1">Leucyltransferase</fullName>
    </alternativeName>
    <alternativeName>
        <fullName evidence="1">Phenyalanyltransferase</fullName>
    </alternativeName>
</protein>
<gene>
    <name evidence="1" type="primary">aat</name>
    <name type="ordered locus">Bmul_1676</name>
    <name type="ordered locus">BMULJ_01567</name>
</gene>
<proteinExistence type="inferred from homology"/>
<keyword id="KW-0012">Acyltransferase</keyword>
<keyword id="KW-0963">Cytoplasm</keyword>
<keyword id="KW-1185">Reference proteome</keyword>
<keyword id="KW-0808">Transferase</keyword>